<accession>C5BN45</accession>
<proteinExistence type="inferred from homology"/>
<gene>
    <name evidence="1" type="primary">rpsF</name>
    <name type="ordered locus">TERTU_0547</name>
</gene>
<keyword id="KW-1185">Reference proteome</keyword>
<keyword id="KW-0687">Ribonucleoprotein</keyword>
<keyword id="KW-0689">Ribosomal protein</keyword>
<keyword id="KW-0694">RNA-binding</keyword>
<keyword id="KW-0699">rRNA-binding</keyword>
<dbReference type="EMBL" id="CP001614">
    <property type="protein sequence ID" value="ACR11329.1"/>
    <property type="molecule type" value="Genomic_DNA"/>
</dbReference>
<dbReference type="RefSeq" id="WP_015817441.1">
    <property type="nucleotide sequence ID" value="NC_012997.1"/>
</dbReference>
<dbReference type="SMR" id="C5BN45"/>
<dbReference type="STRING" id="377629.TERTU_0547"/>
<dbReference type="KEGG" id="ttu:TERTU_0547"/>
<dbReference type="eggNOG" id="COG0360">
    <property type="taxonomic scope" value="Bacteria"/>
</dbReference>
<dbReference type="HOGENOM" id="CLU_113441_6_1_6"/>
<dbReference type="OrthoDB" id="9812702at2"/>
<dbReference type="Proteomes" id="UP000009080">
    <property type="component" value="Chromosome"/>
</dbReference>
<dbReference type="GO" id="GO:0022627">
    <property type="term" value="C:cytosolic small ribosomal subunit"/>
    <property type="evidence" value="ECO:0007669"/>
    <property type="project" value="TreeGrafter"/>
</dbReference>
<dbReference type="GO" id="GO:0070181">
    <property type="term" value="F:small ribosomal subunit rRNA binding"/>
    <property type="evidence" value="ECO:0007669"/>
    <property type="project" value="TreeGrafter"/>
</dbReference>
<dbReference type="GO" id="GO:0003735">
    <property type="term" value="F:structural constituent of ribosome"/>
    <property type="evidence" value="ECO:0007669"/>
    <property type="project" value="InterPro"/>
</dbReference>
<dbReference type="GO" id="GO:0006412">
    <property type="term" value="P:translation"/>
    <property type="evidence" value="ECO:0007669"/>
    <property type="project" value="UniProtKB-UniRule"/>
</dbReference>
<dbReference type="CDD" id="cd00473">
    <property type="entry name" value="bS6"/>
    <property type="match status" value="1"/>
</dbReference>
<dbReference type="FunFam" id="3.30.70.60:FF:000003">
    <property type="entry name" value="30S ribosomal protein S6"/>
    <property type="match status" value="1"/>
</dbReference>
<dbReference type="Gene3D" id="3.30.70.60">
    <property type="match status" value="1"/>
</dbReference>
<dbReference type="HAMAP" id="MF_00360">
    <property type="entry name" value="Ribosomal_bS6"/>
    <property type="match status" value="1"/>
</dbReference>
<dbReference type="InterPro" id="IPR000529">
    <property type="entry name" value="Ribosomal_bS6"/>
</dbReference>
<dbReference type="InterPro" id="IPR035980">
    <property type="entry name" value="Ribosomal_bS6_sf"/>
</dbReference>
<dbReference type="InterPro" id="IPR020814">
    <property type="entry name" value="Ribosomal_S6_plastid/chlpt"/>
</dbReference>
<dbReference type="InterPro" id="IPR014717">
    <property type="entry name" value="Transl_elong_EF1B/ribsomal_bS6"/>
</dbReference>
<dbReference type="NCBIfam" id="TIGR00166">
    <property type="entry name" value="S6"/>
    <property type="match status" value="1"/>
</dbReference>
<dbReference type="PANTHER" id="PTHR21011">
    <property type="entry name" value="MITOCHONDRIAL 28S RIBOSOMAL PROTEIN S6"/>
    <property type="match status" value="1"/>
</dbReference>
<dbReference type="PANTHER" id="PTHR21011:SF1">
    <property type="entry name" value="SMALL RIBOSOMAL SUBUNIT PROTEIN BS6M"/>
    <property type="match status" value="1"/>
</dbReference>
<dbReference type="Pfam" id="PF01250">
    <property type="entry name" value="Ribosomal_S6"/>
    <property type="match status" value="1"/>
</dbReference>
<dbReference type="SUPFAM" id="SSF54995">
    <property type="entry name" value="Ribosomal protein S6"/>
    <property type="match status" value="1"/>
</dbReference>
<name>RS6_TERTT</name>
<evidence type="ECO:0000255" key="1">
    <source>
        <dbReference type="HAMAP-Rule" id="MF_00360"/>
    </source>
</evidence>
<evidence type="ECO:0000256" key="2">
    <source>
        <dbReference type="SAM" id="MobiDB-lite"/>
    </source>
</evidence>
<evidence type="ECO:0000305" key="3"/>
<feature type="chain" id="PRO_1000205408" description="Small ribosomal subunit protein bS6">
    <location>
        <begin position="1"/>
        <end position="151"/>
    </location>
</feature>
<feature type="region of interest" description="Disordered" evidence="2">
    <location>
        <begin position="98"/>
        <end position="151"/>
    </location>
</feature>
<feature type="compositionally biased region" description="Acidic residues" evidence="2">
    <location>
        <begin position="135"/>
        <end position="151"/>
    </location>
</feature>
<reference key="1">
    <citation type="journal article" date="2009" name="PLoS ONE">
        <title>The complete genome of Teredinibacter turnerae T7901: an intracellular endosymbiont of marine wood-boring bivalves (shipworms).</title>
        <authorList>
            <person name="Yang J.C."/>
            <person name="Madupu R."/>
            <person name="Durkin A.S."/>
            <person name="Ekborg N.A."/>
            <person name="Pedamallu C.S."/>
            <person name="Hostetler J.B."/>
            <person name="Radune D."/>
            <person name="Toms B.S."/>
            <person name="Henrissat B."/>
            <person name="Coutinho P.M."/>
            <person name="Schwarz S."/>
            <person name="Field L."/>
            <person name="Trindade-Silva A.E."/>
            <person name="Soares C.A.G."/>
            <person name="Elshahawi S."/>
            <person name="Hanora A."/>
            <person name="Schmidt E.W."/>
            <person name="Haygood M.G."/>
            <person name="Posfai J."/>
            <person name="Benner J."/>
            <person name="Madinger C."/>
            <person name="Nove J."/>
            <person name="Anton B."/>
            <person name="Chaudhary K."/>
            <person name="Foster J."/>
            <person name="Holman A."/>
            <person name="Kumar S."/>
            <person name="Lessard P.A."/>
            <person name="Luyten Y.A."/>
            <person name="Slatko B."/>
            <person name="Wood N."/>
            <person name="Wu B."/>
            <person name="Teplitski M."/>
            <person name="Mougous J.D."/>
            <person name="Ward N."/>
            <person name="Eisen J.A."/>
            <person name="Badger J.H."/>
            <person name="Distel D.L."/>
        </authorList>
    </citation>
    <scope>NUCLEOTIDE SEQUENCE [LARGE SCALE GENOMIC DNA]</scope>
    <source>
        <strain>ATCC 39867 / T7901</strain>
    </source>
</reference>
<protein>
    <recommendedName>
        <fullName evidence="1">Small ribosomal subunit protein bS6</fullName>
    </recommendedName>
    <alternativeName>
        <fullName evidence="3">30S ribosomal protein S6</fullName>
    </alternativeName>
</protein>
<comment type="function">
    <text evidence="1">Binds together with bS18 to 16S ribosomal RNA.</text>
</comment>
<comment type="similarity">
    <text evidence="1">Belongs to the bacterial ribosomal protein bS6 family.</text>
</comment>
<sequence length="151" mass="17351">MRHYEIVFLVHPDQSEQVPGMIERYTSAVKDSGGSVHRLEDWGRRQMAYSINKIHKAHYVLMNIECGDQALEELTTNFRYNDAILRNMVIRCDEAVTEESPIQKAEKENRERKNRAERRAAEAAAATETEKSESEESAEEETSTDTTGEEE</sequence>
<organism>
    <name type="scientific">Teredinibacter turnerae (strain ATCC 39867 / T7901)</name>
    <dbReference type="NCBI Taxonomy" id="377629"/>
    <lineage>
        <taxon>Bacteria</taxon>
        <taxon>Pseudomonadati</taxon>
        <taxon>Pseudomonadota</taxon>
        <taxon>Gammaproteobacteria</taxon>
        <taxon>Cellvibrionales</taxon>
        <taxon>Cellvibrionaceae</taxon>
        <taxon>Teredinibacter</taxon>
    </lineage>
</organism>